<evidence type="ECO:0000250" key="1">
    <source>
        <dbReference type="UniProtKB" id="A0A0H3GDH9"/>
    </source>
</evidence>
<evidence type="ECO:0000250" key="2">
    <source>
        <dbReference type="UniProtKB" id="Q8DP63"/>
    </source>
</evidence>
<evidence type="ECO:0000250" key="3">
    <source>
        <dbReference type="UniProtKB" id="Q8Y9V5"/>
    </source>
</evidence>
<evidence type="ECO:0000255" key="4"/>
<evidence type="ECO:0000255" key="5">
    <source>
        <dbReference type="PIRSR" id="PIRSR037479-1"/>
    </source>
</evidence>
<evidence type="ECO:0000255" key="6">
    <source>
        <dbReference type="PIRSR" id="PIRSR037479-2"/>
    </source>
</evidence>
<evidence type="ECO:0000255" key="7">
    <source>
        <dbReference type="PIRSR" id="PIRSR037479-3"/>
    </source>
</evidence>
<evidence type="ECO:0000255" key="8">
    <source>
        <dbReference type="PIRSR" id="PIRSR037479-4"/>
    </source>
</evidence>
<evidence type="ECO:0000255" key="9">
    <source>
        <dbReference type="PROSITE-ProRule" id="PRU01014"/>
    </source>
</evidence>
<evidence type="ECO:0000269" key="10">
    <source>
    </source>
</evidence>
<evidence type="ECO:0000303" key="11">
    <source>
    </source>
</evidence>
<evidence type="ECO:0000305" key="12"/>
<evidence type="ECO:0000305" key="13">
    <source>
    </source>
</evidence>
<evidence type="ECO:0000312" key="14">
    <source>
        <dbReference type="EMBL" id="CDG44287.1"/>
    </source>
</evidence>
<gene>
    <name evidence="11" type="primary">pgdA</name>
    <name evidence="14" type="ORF">LMON_0423</name>
</gene>
<proteinExistence type="evidence at protein level"/>
<name>PGDA_LISMG</name>
<organism>
    <name type="scientific">Listeria monocytogenes serotype 1/2a (strain EGD / Mackaness)</name>
    <dbReference type="NCBI Taxonomy" id="1334565"/>
    <lineage>
        <taxon>Bacteria</taxon>
        <taxon>Bacillati</taxon>
        <taxon>Bacillota</taxon>
        <taxon>Bacilli</taxon>
        <taxon>Bacillales</taxon>
        <taxon>Listeriaceae</taxon>
        <taxon>Listeria</taxon>
    </lineage>
</organism>
<reference key="1">
    <citation type="journal article" date="2014" name="MBio">
        <title>Comparison of widely used Listeria monocytogenes strains EGD, 10403S, and EGD-e highlights genomic variations underlying differences in pathogenicity.</title>
        <authorList>
            <person name="Becavin C."/>
            <person name="Bouchier C."/>
            <person name="Lechat P."/>
            <person name="Archambaud C."/>
            <person name="Creno S."/>
            <person name="Gouin E."/>
            <person name="Wu Z."/>
            <person name="Kuhbacher A."/>
            <person name="Brisse S."/>
            <person name="Pucciarelli M.G."/>
            <person name="Garcia-del Portillo F."/>
            <person name="Hain T."/>
            <person name="Portnoy D.A."/>
            <person name="Chakraborty T."/>
            <person name="Lecuit M."/>
            <person name="Pizarro-Cerda J."/>
            <person name="Moszer I."/>
            <person name="Bierne H."/>
            <person name="Cossart P."/>
        </authorList>
    </citation>
    <scope>NUCLEOTIDE SEQUENCE [LARGE SCALE GENOMIC DNA]</scope>
    <source>
        <strain>EGD / Mackaness</strain>
    </source>
</reference>
<reference key="2">
    <citation type="journal article" date="2009" name="J. Microbiol. Biotechnol.">
        <title>Inactivation of the wall-associated de-N-acetylase (PgdA) of Listeria monocytogenes results in greater susceptibility of the cells to induced autolysis.</title>
        <authorList>
            <person name="Popowska M."/>
            <person name="Kusio M."/>
            <person name="Szymanska P."/>
            <person name="Markiewicz Z."/>
        </authorList>
    </citation>
    <scope>FUNCTION</scope>
    <scope>CATALYTIC ACTIVITY</scope>
    <scope>SUBSTRATE SPECIFICITY</scope>
    <scope>DISRUPTION PHENOTYPE</scope>
    <scope>3D-STRUCTURE MODELING OF THE C-TERMINUS</scope>
    <source>
        <strain evidence="11">EGD / Mackaness</strain>
    </source>
</reference>
<keyword id="KW-1003">Cell membrane</keyword>
<keyword id="KW-0134">Cell wall</keyword>
<keyword id="KW-0378">Hydrolase</keyword>
<keyword id="KW-0472">Membrane</keyword>
<keyword id="KW-0479">Metal-binding</keyword>
<keyword id="KW-0964">Secreted</keyword>
<keyword id="KW-0812">Transmembrane</keyword>
<keyword id="KW-1133">Transmembrane helix</keyword>
<keyword id="KW-0843">Virulence</keyword>
<keyword id="KW-0862">Zinc</keyword>
<feature type="chain" id="PRO_0000452094" description="Peptidoglycan-N-acetylglucosamine deacetylase PgdA">
    <location>
        <begin position="1"/>
        <end position="466"/>
    </location>
</feature>
<feature type="topological domain" description="Cytoplasmic" evidence="12">
    <location>
        <begin position="1"/>
        <end position="5"/>
    </location>
</feature>
<feature type="transmembrane region" description="Helical" evidence="4">
    <location>
        <begin position="6"/>
        <end position="26"/>
    </location>
</feature>
<feature type="topological domain" description="Extracellular" evidence="12">
    <location>
        <begin position="27"/>
        <end position="466"/>
    </location>
</feature>
<feature type="domain" description="NodB homology" evidence="9">
    <location>
        <begin position="266"/>
        <end position="440"/>
    </location>
</feature>
<feature type="active site" description="Proton acceptor" evidence="5 9">
    <location>
        <position position="273"/>
    </location>
</feature>
<feature type="active site" description="Proton donor" evidence="5 9">
    <location>
        <position position="415"/>
    </location>
</feature>
<feature type="binding site" evidence="7">
    <location>
        <position position="274"/>
    </location>
    <ligand>
        <name>Zn(2+)</name>
        <dbReference type="ChEBI" id="CHEBI:29105"/>
    </ligand>
</feature>
<feature type="binding site" evidence="7">
    <location>
        <position position="324"/>
    </location>
    <ligand>
        <name>Zn(2+)</name>
        <dbReference type="ChEBI" id="CHEBI:29105"/>
    </ligand>
</feature>
<feature type="binding site" evidence="7">
    <location>
        <position position="328"/>
    </location>
    <ligand>
        <name>Zn(2+)</name>
        <dbReference type="ChEBI" id="CHEBI:29105"/>
    </ligand>
</feature>
<feature type="binding site" evidence="6">
    <location>
        <position position="365"/>
    </location>
    <ligand>
        <name>substrate</name>
    </ligand>
</feature>
<feature type="site" description="Raises pKa of active site His" evidence="8">
    <location>
        <position position="389"/>
    </location>
</feature>
<comment type="function">
    <text evidence="1 3 10">Catalyzes the deacetylation of N-acetylglucosamine (GlcNAc) residues in peptidoglycan (PG). Also deacetylates N-acetylated PG. Does not deacetylate N-acetylmuramic acid (PubMed:19809250). Confers host lysozyme resistance. Critical for virulence and escape from innate immune response of the host. Required for intracellular survival of bacteria in macrophages of the host. Required for successful host colonization (By similarity). Controls the production of inflammatory mediators in the bone marrow derived macrophages (BMMs) of the infected mouse (By similarity). Suppresses Toll-like receptor 2 (TLR2)-dependent secretion of interleukin 6 (IL-6) and interferon-beta (IFN-beta) in the macrophages of the infected mouse. May decrease accessibility of pattern recognition receptors (PRRs) such as nucleotide-binding oligomerization domain protein (NOD) 1 of the host to the bacterial cell wall components (By similarity). Protects cells from autolysis induced by lysozyme or by other autolysis-inducing agents (PubMed:19809250).</text>
</comment>
<comment type="catalytic activity">
    <reaction evidence="10">
        <text>peptidoglycan-N-acetyl-D-glucosamine + H2O = peptidoglycan-D-glucosamine + acetate.</text>
        <dbReference type="EC" id="3.5.1.104"/>
    </reaction>
</comment>
<comment type="cofactor">
    <cofactor evidence="2">
        <name>Zn(2+)</name>
        <dbReference type="ChEBI" id="CHEBI:29105"/>
    </cofactor>
</comment>
<comment type="subunit">
    <text evidence="3">Homodimer. Interacts (via transmembrane domain) with PbpA1 (via transmembrane domain); the interaction is important for the peptidoglycan N-deacetylase function of this protein.</text>
</comment>
<comment type="subcellular location">
    <subcellularLocation>
        <location evidence="3">Cell membrane</location>
        <topology evidence="3 4">Single-pass membrane protein</topology>
        <orientation evidence="3">Extracellular side</orientation>
    </subcellularLocation>
    <subcellularLocation>
        <location evidence="13">Secreted</location>
        <location evidence="13">Cell wall</location>
    </subcellularLocation>
</comment>
<comment type="induction">
    <text evidence="1">Transcriptionally up-regulated by response regulator DegU and abundant non-coding RNA encoded by rli31.</text>
</comment>
<comment type="disruption phenotype">
    <text evidence="10">Cells lacking this gene have no or very low levels of de-N-acetylated sugar moieties in peptidoglycan. Mutant cells have normal growth in logarithmic and stationary phases at various temperatures and in different growth media and normal morphological appearance. The rate of autolysis of the cell wall peptidoglycan induced by EDTA, Triton-X, lysozyme or mutanolysin is significantly faster and the mutant cells have a slight increase in susceptibility to beta-lactam antibiotics ampicillin, penicillin and octacillin compared to wild-type.</text>
</comment>
<dbReference type="EC" id="3.5.1.104" evidence="10"/>
<dbReference type="EMBL" id="HG421741">
    <property type="protein sequence ID" value="CDG44287.1"/>
    <property type="molecule type" value="Genomic_DNA"/>
</dbReference>
<dbReference type="RefSeq" id="WP_003733946.1">
    <property type="nucleotide sequence ID" value="NC_022568.1"/>
</dbReference>
<dbReference type="SMR" id="A0A3Q0NBH7"/>
<dbReference type="KEGG" id="lmod:LMON_0423"/>
<dbReference type="Proteomes" id="UP000016703">
    <property type="component" value="Chromosome"/>
</dbReference>
<dbReference type="GO" id="GO:0005576">
    <property type="term" value="C:extracellular region"/>
    <property type="evidence" value="ECO:0007669"/>
    <property type="project" value="UniProtKB-KW"/>
</dbReference>
<dbReference type="GO" id="GO:0009275">
    <property type="term" value="C:Gram-positive-bacterium-type cell wall"/>
    <property type="evidence" value="ECO:0000305"/>
    <property type="project" value="UniProtKB"/>
</dbReference>
<dbReference type="GO" id="GO:0005886">
    <property type="term" value="C:plasma membrane"/>
    <property type="evidence" value="ECO:0007669"/>
    <property type="project" value="UniProtKB-SubCell"/>
</dbReference>
<dbReference type="GO" id="GO:0060241">
    <property type="term" value="F:lysozyme inhibitor activity"/>
    <property type="evidence" value="ECO:0000250"/>
    <property type="project" value="UniProtKB"/>
</dbReference>
<dbReference type="GO" id="GO:0050119">
    <property type="term" value="F:N-acetylglucosamine deacetylase activity"/>
    <property type="evidence" value="ECO:0000314"/>
    <property type="project" value="UniProtKB"/>
</dbReference>
<dbReference type="GO" id="GO:0042803">
    <property type="term" value="F:protein homodimerization activity"/>
    <property type="evidence" value="ECO:0000250"/>
    <property type="project" value="UniProtKB"/>
</dbReference>
<dbReference type="GO" id="GO:0008270">
    <property type="term" value="F:zinc ion binding"/>
    <property type="evidence" value="ECO:0000250"/>
    <property type="project" value="UniProtKB"/>
</dbReference>
<dbReference type="GO" id="GO:0001896">
    <property type="term" value="P:autolysis"/>
    <property type="evidence" value="ECO:0000315"/>
    <property type="project" value="UniProtKB"/>
</dbReference>
<dbReference type="GO" id="GO:0005975">
    <property type="term" value="P:carbohydrate metabolic process"/>
    <property type="evidence" value="ECO:0007669"/>
    <property type="project" value="InterPro"/>
</dbReference>
<dbReference type="GO" id="GO:0042545">
    <property type="term" value="P:cell wall modification"/>
    <property type="evidence" value="ECO:0000314"/>
    <property type="project" value="UniProtKB"/>
</dbReference>
<dbReference type="GO" id="GO:0141043">
    <property type="term" value="P:symbiont-mediated evasion of host innate immune response"/>
    <property type="evidence" value="ECO:0000250"/>
    <property type="project" value="UniProtKB"/>
</dbReference>
<dbReference type="CDD" id="cd10954">
    <property type="entry name" value="CE4_CtAXE_like"/>
    <property type="match status" value="1"/>
</dbReference>
<dbReference type="Gene3D" id="3.20.20.370">
    <property type="entry name" value="Glycoside hydrolase/deacetylase"/>
    <property type="match status" value="1"/>
</dbReference>
<dbReference type="InterPro" id="IPR011330">
    <property type="entry name" value="Glyco_hydro/deAcase_b/a-brl"/>
</dbReference>
<dbReference type="InterPro" id="IPR002509">
    <property type="entry name" value="NODB_dom"/>
</dbReference>
<dbReference type="InterPro" id="IPR017219">
    <property type="entry name" value="Peptidoglycan_deacetylase"/>
</dbReference>
<dbReference type="InterPro" id="IPR050248">
    <property type="entry name" value="Polysacc_deacetylase_ArnD"/>
</dbReference>
<dbReference type="PANTHER" id="PTHR10587:SF133">
    <property type="entry name" value="CHITIN DEACETYLASE 1-RELATED"/>
    <property type="match status" value="1"/>
</dbReference>
<dbReference type="PANTHER" id="PTHR10587">
    <property type="entry name" value="GLYCOSYL TRANSFERASE-RELATED"/>
    <property type="match status" value="1"/>
</dbReference>
<dbReference type="Pfam" id="PF01522">
    <property type="entry name" value="Polysacc_deac_1"/>
    <property type="match status" value="1"/>
</dbReference>
<dbReference type="PIRSF" id="PIRSF037479">
    <property type="entry name" value="PG_GlcNAc_deacetylase"/>
    <property type="match status" value="1"/>
</dbReference>
<dbReference type="SUPFAM" id="SSF88713">
    <property type="entry name" value="Glycoside hydrolase/deacetylase"/>
    <property type="match status" value="1"/>
</dbReference>
<dbReference type="PROSITE" id="PS51677">
    <property type="entry name" value="NODB"/>
    <property type="match status" value="1"/>
</dbReference>
<protein>
    <recommendedName>
        <fullName evidence="11">Peptidoglycan-N-acetylglucosamine deacetylase PgdA</fullName>
        <shortName evidence="12">Peptidoglycan GlcNAc deacetylase</shortName>
        <ecNumber evidence="10">3.5.1.104</ecNumber>
    </recommendedName>
    <alternativeName>
        <fullName evidence="11">N-acetylglucosamine de-N-acetylase PgdA</fullName>
    </alternativeName>
    <alternativeName>
        <fullName evidence="12">Peptidoglycan N-deacetylase</fullName>
        <shortName evidence="12">PG N-deacetylase</shortName>
    </alternativeName>
    <alternativeName>
        <fullName evidence="12">Petptidoglycan deacetylase</fullName>
        <shortName evidence="12">PG deacetylase</shortName>
    </alternativeName>
</protein>
<accession>A0A3Q0NBH7</accession>
<sequence length="466" mass="52496">MKIRWIRLSLVAILIIAVVFIGVIGFQKYQFSKSRNKVIMQMDRLMKDQDGGNFRRLDKKENGVEIISYIPKTTEKKDNEIIQKEIGKATDAEVKKLNRDKETQGIIFYTYQKHRMAEQAISYKAVQSEYVKEGRTKFVLKDKKDICKNIVTDAETGALLTLGEVLIKSNQTKLNLKTAVEEELIKTGDFSLKDVGNLGKIKSLVKWNQTDFEITNSEIILPVKIPGAPEPKKVKVKLADIASSVNKRYLPSSVKVPEVPKAKTNKRIALTFDDGPSSSVTPGVLDTLKRHNVKATFFVLGSSVIQNPGLVKRELEEGHQVGSHSWDHPQLTKQSTQEVYNQILKTQKAVFDQTGYFPTTMRPPYGAVNKQVAEEIGLPIIQWSVDTEDWKYRNAGIVTKKVLAGATDGAIVLMHDIHKTTAASLDTTLTKLKSQGYEFVTIDELYGEKLQIGKQYFDKTDSRMVK</sequence>